<feature type="transit peptide" description="Chloroplast" evidence="4">
    <location>
        <begin position="1"/>
        <end position="76"/>
    </location>
</feature>
<feature type="chain" id="PRO_0000034360" description="ADP,ATP carrier protein 2, chloroplastic">
    <location>
        <begin position="77"/>
        <end position="618"/>
    </location>
</feature>
<feature type="transmembrane region" description="Helical" evidence="1">
    <location>
        <begin position="110"/>
        <end position="130"/>
    </location>
</feature>
<feature type="transmembrane region" description="Helical" evidence="1">
    <location>
        <begin position="148"/>
        <end position="168"/>
    </location>
</feature>
<feature type="transmembrane region" description="Helical" evidence="1">
    <location>
        <begin position="179"/>
        <end position="199"/>
    </location>
</feature>
<feature type="transmembrane region" description="Helical" evidence="1">
    <location>
        <begin position="237"/>
        <end position="257"/>
    </location>
</feature>
<feature type="transmembrane region" description="Helical" evidence="1">
    <location>
        <begin position="270"/>
        <end position="289"/>
    </location>
</feature>
<feature type="transmembrane region" description="Helical" evidence="1">
    <location>
        <begin position="312"/>
        <end position="332"/>
    </location>
</feature>
<feature type="transmembrane region" description="Helical" evidence="1">
    <location>
        <begin position="368"/>
        <end position="388"/>
    </location>
</feature>
<feature type="transmembrane region" description="Helical" evidence="1">
    <location>
        <begin position="401"/>
        <end position="421"/>
    </location>
</feature>
<feature type="transmembrane region" description="Helical" evidence="1">
    <location>
        <begin position="441"/>
        <end position="461"/>
    </location>
</feature>
<feature type="transmembrane region" description="Helical" evidence="1">
    <location>
        <begin position="464"/>
        <end position="484"/>
    </location>
</feature>
<feature type="transmembrane region" description="Helical" evidence="1">
    <location>
        <begin position="542"/>
        <end position="562"/>
    </location>
</feature>
<feature type="region of interest" description="Disordered" evidence="2">
    <location>
        <begin position="586"/>
        <end position="618"/>
    </location>
</feature>
<feature type="compositionally biased region" description="Polar residues" evidence="2">
    <location>
        <begin position="603"/>
        <end position="618"/>
    </location>
</feature>
<feature type="modified residue" description="N-acetylalanine" evidence="4">
    <location>
        <position position="77"/>
    </location>
</feature>
<gene>
    <name type="primary">AATP2</name>
    <name type="ordered locus">At1g15500</name>
    <name type="ORF">T16N11.1</name>
</gene>
<comment type="subcellular location">
    <subcellularLocation>
        <location evidence="1">Plastid</location>
        <location evidence="1">Chloroplast membrane</location>
        <topology evidence="1">Multi-pass membrane protein</topology>
    </subcellularLocation>
</comment>
<comment type="similarity">
    <text evidence="3">Belongs to the ADP/ATP translocase tlc (TC 2.A.12.2) family.</text>
</comment>
<sequence length="618" mass="67530">MEGLIQTRGILSLPAKPIGVRRLLQPSHGLKQRLFTTNLPALSLSSNGHKKFQAFQQIPLGISVSHKERSRGFICKAEAAAAGGGNVFDEGDTAAMAVSPKIFGVEVTTLKKIVPLGLMFFCILFNYTILRDTKDVLVVTAKGSSAEIIPFLKTWVNLPMAIGFMLLYTKLSNVLSKKALFYTVIVPFIVYFGAFGFVMYPLSNLIHPEALADKLLATLGPRFMGPLAIMRIWSFCLFYVMAELWGSVVVSVLFWGFANQITTVDEAKKFYPLFGLGANVALIFSGRTVKYFSNMRKNLGPGVDGWAVSLKAMMSIVVGMGLAICFLYWWVNRYVPLPTRSKKKKVKPQMGTMESLKFLVSSPYIRDLATLVVAYGISINLVEVTWKSKLKAQFPSPNEYSAFMGDFSTCTGIATFTMMLLSQYVFKKYGWGVAAKITPTVLLLTGVAFFSLILFGGPFAPLVAKLGMTPLLAAVYVGALQNIFSKSAKYSLFDPCKEMAYIPLDEDTKVKGKAAIDVVCNPLGKSGGALIQQFMILTFGSLANSTPYLGVILLGIVTAWLAAAKSLEGQFNTLMSEEELEREMERASSVKIPVVSQEDAPSGETTSQLSEKSTPTGI</sequence>
<organism>
    <name type="scientific">Arabidopsis thaliana</name>
    <name type="common">Mouse-ear cress</name>
    <dbReference type="NCBI Taxonomy" id="3702"/>
    <lineage>
        <taxon>Eukaryota</taxon>
        <taxon>Viridiplantae</taxon>
        <taxon>Streptophyta</taxon>
        <taxon>Embryophyta</taxon>
        <taxon>Tracheophyta</taxon>
        <taxon>Spermatophyta</taxon>
        <taxon>Magnoliopsida</taxon>
        <taxon>eudicotyledons</taxon>
        <taxon>Gunneridae</taxon>
        <taxon>Pentapetalae</taxon>
        <taxon>rosids</taxon>
        <taxon>malvids</taxon>
        <taxon>Brassicales</taxon>
        <taxon>Brassicaceae</taxon>
        <taxon>Camelineae</taxon>
        <taxon>Arabidopsis</taxon>
    </lineage>
</organism>
<reference key="1">
    <citation type="journal article" date="1998" name="Eur. J. Biochem.">
        <title>Occurrence of two plastidic ATP/ADP transporters in Arabidopsis thaliana L. -- molecular characterisation and comparative structural analysis of similar ATP/ADP translocators from plastids and Rickettsia prowazekii.</title>
        <authorList>
            <person name="Moehlmann T."/>
            <person name="Tjaden J."/>
            <person name="Schwoeppe C."/>
            <person name="Winkler H.H."/>
            <person name="Kampfenkel K."/>
            <person name="Neuhaus H.E."/>
        </authorList>
    </citation>
    <scope>NUCLEOTIDE SEQUENCE [MRNA]</scope>
</reference>
<reference key="2">
    <citation type="submission" date="2010-11" db="EMBL/GenBank/DDBJ databases">
        <authorList>
            <person name="Neuhaus E."/>
        </authorList>
    </citation>
    <scope>SEQUENCE REVISION</scope>
</reference>
<reference key="3">
    <citation type="journal article" date="2000" name="Nature">
        <title>Sequence and analysis of chromosome 1 of the plant Arabidopsis thaliana.</title>
        <authorList>
            <person name="Theologis A."/>
            <person name="Ecker J.R."/>
            <person name="Palm C.J."/>
            <person name="Federspiel N.A."/>
            <person name="Kaul S."/>
            <person name="White O."/>
            <person name="Alonso J."/>
            <person name="Altafi H."/>
            <person name="Araujo R."/>
            <person name="Bowman C.L."/>
            <person name="Brooks S.Y."/>
            <person name="Buehler E."/>
            <person name="Chan A."/>
            <person name="Chao Q."/>
            <person name="Chen H."/>
            <person name="Cheuk R.F."/>
            <person name="Chin C.W."/>
            <person name="Chung M.K."/>
            <person name="Conn L."/>
            <person name="Conway A.B."/>
            <person name="Conway A.R."/>
            <person name="Creasy T.H."/>
            <person name="Dewar K."/>
            <person name="Dunn P."/>
            <person name="Etgu P."/>
            <person name="Feldblyum T.V."/>
            <person name="Feng J.-D."/>
            <person name="Fong B."/>
            <person name="Fujii C.Y."/>
            <person name="Gill J.E."/>
            <person name="Goldsmith A.D."/>
            <person name="Haas B."/>
            <person name="Hansen N.F."/>
            <person name="Hughes B."/>
            <person name="Huizar L."/>
            <person name="Hunter J.L."/>
            <person name="Jenkins J."/>
            <person name="Johnson-Hopson C."/>
            <person name="Khan S."/>
            <person name="Khaykin E."/>
            <person name="Kim C.J."/>
            <person name="Koo H.L."/>
            <person name="Kremenetskaia I."/>
            <person name="Kurtz D.B."/>
            <person name="Kwan A."/>
            <person name="Lam B."/>
            <person name="Langin-Hooper S."/>
            <person name="Lee A."/>
            <person name="Lee J.M."/>
            <person name="Lenz C.A."/>
            <person name="Li J.H."/>
            <person name="Li Y.-P."/>
            <person name="Lin X."/>
            <person name="Liu S.X."/>
            <person name="Liu Z.A."/>
            <person name="Luros J.S."/>
            <person name="Maiti R."/>
            <person name="Marziali A."/>
            <person name="Militscher J."/>
            <person name="Miranda M."/>
            <person name="Nguyen M."/>
            <person name="Nierman W.C."/>
            <person name="Osborne B.I."/>
            <person name="Pai G."/>
            <person name="Peterson J."/>
            <person name="Pham P.K."/>
            <person name="Rizzo M."/>
            <person name="Rooney T."/>
            <person name="Rowley D."/>
            <person name="Sakano H."/>
            <person name="Salzberg S.L."/>
            <person name="Schwartz J.R."/>
            <person name="Shinn P."/>
            <person name="Southwick A.M."/>
            <person name="Sun H."/>
            <person name="Tallon L.J."/>
            <person name="Tambunga G."/>
            <person name="Toriumi M.J."/>
            <person name="Town C.D."/>
            <person name="Utterback T."/>
            <person name="Van Aken S."/>
            <person name="Vaysberg M."/>
            <person name="Vysotskaia V.S."/>
            <person name="Walker M."/>
            <person name="Wu D."/>
            <person name="Yu G."/>
            <person name="Fraser C.M."/>
            <person name="Venter J.C."/>
            <person name="Davis R.W."/>
        </authorList>
    </citation>
    <scope>NUCLEOTIDE SEQUENCE [LARGE SCALE GENOMIC DNA]</scope>
    <source>
        <strain>cv. Columbia</strain>
    </source>
</reference>
<reference key="4">
    <citation type="journal article" date="2017" name="Plant J.">
        <title>Araport11: a complete reannotation of the Arabidopsis thaliana reference genome.</title>
        <authorList>
            <person name="Cheng C.Y."/>
            <person name="Krishnakumar V."/>
            <person name="Chan A.P."/>
            <person name="Thibaud-Nissen F."/>
            <person name="Schobel S."/>
            <person name="Town C.D."/>
        </authorList>
    </citation>
    <scope>GENOME REANNOTATION</scope>
    <source>
        <strain>cv. Columbia</strain>
    </source>
</reference>
<reference key="5">
    <citation type="journal article" date="2003" name="Science">
        <title>Empirical analysis of transcriptional activity in the Arabidopsis genome.</title>
        <authorList>
            <person name="Yamada K."/>
            <person name="Lim J."/>
            <person name="Dale J.M."/>
            <person name="Chen H."/>
            <person name="Shinn P."/>
            <person name="Palm C.J."/>
            <person name="Southwick A.M."/>
            <person name="Wu H.C."/>
            <person name="Kim C.J."/>
            <person name="Nguyen M."/>
            <person name="Pham P.K."/>
            <person name="Cheuk R.F."/>
            <person name="Karlin-Newmann G."/>
            <person name="Liu S.X."/>
            <person name="Lam B."/>
            <person name="Sakano H."/>
            <person name="Wu T."/>
            <person name="Yu G."/>
            <person name="Miranda M."/>
            <person name="Quach H.L."/>
            <person name="Tripp M."/>
            <person name="Chang C.H."/>
            <person name="Lee J.M."/>
            <person name="Toriumi M.J."/>
            <person name="Chan M.M."/>
            <person name="Tang C.C."/>
            <person name="Onodera C.S."/>
            <person name="Deng J.M."/>
            <person name="Akiyama K."/>
            <person name="Ansari Y."/>
            <person name="Arakawa T."/>
            <person name="Banh J."/>
            <person name="Banno F."/>
            <person name="Bowser L."/>
            <person name="Brooks S.Y."/>
            <person name="Carninci P."/>
            <person name="Chao Q."/>
            <person name="Choy N."/>
            <person name="Enju A."/>
            <person name="Goldsmith A.D."/>
            <person name="Gurjal M."/>
            <person name="Hansen N.F."/>
            <person name="Hayashizaki Y."/>
            <person name="Johnson-Hopson C."/>
            <person name="Hsuan V.W."/>
            <person name="Iida K."/>
            <person name="Karnes M."/>
            <person name="Khan S."/>
            <person name="Koesema E."/>
            <person name="Ishida J."/>
            <person name="Jiang P.X."/>
            <person name="Jones T."/>
            <person name="Kawai J."/>
            <person name="Kamiya A."/>
            <person name="Meyers C."/>
            <person name="Nakajima M."/>
            <person name="Narusaka M."/>
            <person name="Seki M."/>
            <person name="Sakurai T."/>
            <person name="Satou M."/>
            <person name="Tamse R."/>
            <person name="Vaysberg M."/>
            <person name="Wallender E.K."/>
            <person name="Wong C."/>
            <person name="Yamamura Y."/>
            <person name="Yuan S."/>
            <person name="Shinozaki K."/>
            <person name="Davis R.W."/>
            <person name="Theologis A."/>
            <person name="Ecker J.R."/>
        </authorList>
    </citation>
    <scope>NUCLEOTIDE SEQUENCE [LARGE SCALE MRNA]</scope>
    <source>
        <strain>cv. Columbia</strain>
    </source>
</reference>
<reference key="6">
    <citation type="submission" date="2002-03" db="EMBL/GenBank/DDBJ databases">
        <title>Full-length cDNA from Arabidopsis thaliana.</title>
        <authorList>
            <person name="Brover V.V."/>
            <person name="Troukhan M.E."/>
            <person name="Alexandrov N.A."/>
            <person name="Lu Y.-P."/>
            <person name="Flavell R.B."/>
            <person name="Feldmann K.A."/>
        </authorList>
    </citation>
    <scope>NUCLEOTIDE SEQUENCE [LARGE SCALE MRNA]</scope>
</reference>
<reference key="7">
    <citation type="journal article" date="2009" name="Plant Physiol.">
        <title>Large-scale Arabidopsis phosphoproteome profiling reveals novel chloroplast kinase substrates and phosphorylation networks.</title>
        <authorList>
            <person name="Reiland S."/>
            <person name="Messerli G."/>
            <person name="Baerenfaller K."/>
            <person name="Gerrits B."/>
            <person name="Endler A."/>
            <person name="Grossmann J."/>
            <person name="Gruissem W."/>
            <person name="Baginsky S."/>
        </authorList>
    </citation>
    <scope>IDENTIFICATION BY MASS SPECTROMETRY [LARGE SCALE ANALYSIS]</scope>
</reference>
<reference key="8">
    <citation type="journal article" date="2012" name="Mol. Cell. Proteomics">
        <title>Comparative large-scale characterisation of plant vs. mammal proteins reveals similar and idiosyncratic N-alpha acetylation features.</title>
        <authorList>
            <person name="Bienvenut W.V."/>
            <person name="Sumpton D."/>
            <person name="Martinez A."/>
            <person name="Lilla S."/>
            <person name="Espagne C."/>
            <person name="Meinnel T."/>
            <person name="Giglione C."/>
        </authorList>
    </citation>
    <scope>ACETYLATION [LARGE SCALE ANALYSIS] AT ALA-77</scope>
    <scope>CLEAVAGE OF TRANSIT PEPTIDE [LARGE SCALE ANALYSIS] AFTER LYS-76</scope>
    <scope>IDENTIFICATION BY MASS SPECTROMETRY [LARGE SCALE ANALYSIS]</scope>
</reference>
<dbReference type="EMBL" id="X94626">
    <property type="protein sequence ID" value="CAA64329.2"/>
    <property type="molecule type" value="mRNA"/>
</dbReference>
<dbReference type="EMBL" id="AC013453">
    <property type="protein sequence ID" value="AAF71976.1"/>
    <property type="molecule type" value="Genomic_DNA"/>
</dbReference>
<dbReference type="EMBL" id="CP002684">
    <property type="protein sequence ID" value="AEE29330.1"/>
    <property type="molecule type" value="Genomic_DNA"/>
</dbReference>
<dbReference type="EMBL" id="AY081350">
    <property type="protein sequence ID" value="AAL91239.1"/>
    <property type="molecule type" value="mRNA"/>
</dbReference>
<dbReference type="EMBL" id="AY128844">
    <property type="protein sequence ID" value="AAM91244.1"/>
    <property type="molecule type" value="mRNA"/>
</dbReference>
<dbReference type="EMBL" id="AY084374">
    <property type="protein sequence ID" value="AAM60955.1"/>
    <property type="molecule type" value="mRNA"/>
</dbReference>
<dbReference type="PIR" id="G86288">
    <property type="entry name" value="G86288"/>
</dbReference>
<dbReference type="RefSeq" id="NP_173003.1">
    <property type="nucleotide sequence ID" value="NM_101419.3"/>
</dbReference>
<dbReference type="BioGRID" id="23360">
    <property type="interactions" value="5"/>
</dbReference>
<dbReference type="FunCoup" id="P92935">
    <property type="interactions" value="355"/>
</dbReference>
<dbReference type="IntAct" id="P92935">
    <property type="interactions" value="3"/>
</dbReference>
<dbReference type="STRING" id="3702.P92935"/>
<dbReference type="TCDB" id="2.A.12.1.19">
    <property type="family name" value="the atp:adp antiporter (aaa) family"/>
</dbReference>
<dbReference type="iPTMnet" id="P92935"/>
<dbReference type="PaxDb" id="3702-AT1G15500.1"/>
<dbReference type="ProteomicsDB" id="232427"/>
<dbReference type="EnsemblPlants" id="AT1G15500.1">
    <property type="protein sequence ID" value="AT1G15500.1"/>
    <property type="gene ID" value="AT1G15500"/>
</dbReference>
<dbReference type="GeneID" id="838120"/>
<dbReference type="Gramene" id="AT1G15500.1">
    <property type="protein sequence ID" value="AT1G15500.1"/>
    <property type="gene ID" value="AT1G15500"/>
</dbReference>
<dbReference type="KEGG" id="ath:AT1G15500"/>
<dbReference type="Araport" id="AT1G15500"/>
<dbReference type="TAIR" id="AT1G15500">
    <property type="gene designation" value="ATNTT2"/>
</dbReference>
<dbReference type="eggNOG" id="ENOG502QSRY">
    <property type="taxonomic scope" value="Eukaryota"/>
</dbReference>
<dbReference type="HOGENOM" id="CLU_023964_0_0_1"/>
<dbReference type="InParanoid" id="P92935"/>
<dbReference type="OMA" id="HPNTIDY"/>
<dbReference type="OrthoDB" id="2190844at2759"/>
<dbReference type="PhylomeDB" id="P92935"/>
<dbReference type="BioCyc" id="MetaCyc:AT1G15500-MONOMER"/>
<dbReference type="CD-CODE" id="4299E36E">
    <property type="entry name" value="Nucleolus"/>
</dbReference>
<dbReference type="PRO" id="PR:P92935"/>
<dbReference type="Proteomes" id="UP000006548">
    <property type="component" value="Chromosome 1"/>
</dbReference>
<dbReference type="ExpressionAtlas" id="P92935">
    <property type="expression patterns" value="baseline and differential"/>
</dbReference>
<dbReference type="GO" id="GO:0009507">
    <property type="term" value="C:chloroplast"/>
    <property type="evidence" value="ECO:0007005"/>
    <property type="project" value="TAIR"/>
</dbReference>
<dbReference type="GO" id="GO:0009941">
    <property type="term" value="C:chloroplast envelope"/>
    <property type="evidence" value="ECO:0007005"/>
    <property type="project" value="TAIR"/>
</dbReference>
<dbReference type="GO" id="GO:0031969">
    <property type="term" value="C:chloroplast membrane"/>
    <property type="evidence" value="ECO:0007669"/>
    <property type="project" value="UniProtKB-SubCell"/>
</dbReference>
<dbReference type="GO" id="GO:0005737">
    <property type="term" value="C:cytoplasm"/>
    <property type="evidence" value="ECO:0007005"/>
    <property type="project" value="TAIR"/>
</dbReference>
<dbReference type="GO" id="GO:0009536">
    <property type="term" value="C:plastid"/>
    <property type="evidence" value="ECO:0007005"/>
    <property type="project" value="TAIR"/>
</dbReference>
<dbReference type="GO" id="GO:0005524">
    <property type="term" value="F:ATP binding"/>
    <property type="evidence" value="ECO:0007669"/>
    <property type="project" value="UniProtKB-KW"/>
</dbReference>
<dbReference type="GO" id="GO:0005471">
    <property type="term" value="F:ATP:ADP antiporter activity"/>
    <property type="evidence" value="ECO:0007669"/>
    <property type="project" value="InterPro"/>
</dbReference>
<dbReference type="InterPro" id="IPR004667">
    <property type="entry name" value="ADP_ATP_car_bac_type"/>
</dbReference>
<dbReference type="NCBIfam" id="TIGR00769">
    <property type="entry name" value="AAA"/>
    <property type="match status" value="1"/>
</dbReference>
<dbReference type="PANTHER" id="PTHR31187">
    <property type="match status" value="1"/>
</dbReference>
<dbReference type="PANTHER" id="PTHR31187:SF14">
    <property type="entry name" value="ADP,ATP CARRIER PROTEIN 2, CHLOROPLASTIC"/>
    <property type="match status" value="1"/>
</dbReference>
<dbReference type="Pfam" id="PF03219">
    <property type="entry name" value="TLC"/>
    <property type="match status" value="1"/>
</dbReference>
<evidence type="ECO:0000255" key="1"/>
<evidence type="ECO:0000256" key="2">
    <source>
        <dbReference type="SAM" id="MobiDB-lite"/>
    </source>
</evidence>
<evidence type="ECO:0000305" key="3"/>
<evidence type="ECO:0007744" key="4">
    <source>
    </source>
</evidence>
<accession>P92935</accession>
<accession>Q9M9E3</accession>
<protein>
    <recommendedName>
        <fullName>ADP,ATP carrier protein 2, chloroplastic</fullName>
    </recommendedName>
    <alternativeName>
        <fullName>ADP/ATP translocase 2</fullName>
    </alternativeName>
    <alternativeName>
        <fullName>Adenine nucleotide translocase 2</fullName>
    </alternativeName>
</protein>
<name>TLC2_ARATH</name>
<keyword id="KW-0007">Acetylation</keyword>
<keyword id="KW-0067">ATP-binding</keyword>
<keyword id="KW-0150">Chloroplast</keyword>
<keyword id="KW-0472">Membrane</keyword>
<keyword id="KW-0547">Nucleotide-binding</keyword>
<keyword id="KW-0934">Plastid</keyword>
<keyword id="KW-1185">Reference proteome</keyword>
<keyword id="KW-0809">Transit peptide</keyword>
<keyword id="KW-0812">Transmembrane</keyword>
<keyword id="KW-1133">Transmembrane helix</keyword>
<keyword id="KW-0813">Transport</keyword>
<proteinExistence type="evidence at protein level"/>